<feature type="chain" id="PRO_1000192357" description="Cytochrome b6-f complex subunit 8">
    <location>
        <begin position="1"/>
        <end position="29"/>
    </location>
</feature>
<feature type="transmembrane region" description="Helical" evidence="1">
    <location>
        <begin position="3"/>
        <end position="23"/>
    </location>
</feature>
<dbReference type="EMBL" id="CP001287">
    <property type="protein sequence ID" value="ACK66406.1"/>
    <property type="molecule type" value="Genomic_DNA"/>
</dbReference>
<dbReference type="RefSeq" id="WP_008277373.1">
    <property type="nucleotide sequence ID" value="NC_011726.1"/>
</dbReference>
<dbReference type="SMR" id="B7K2L3"/>
<dbReference type="STRING" id="41431.PCC8801_2395"/>
<dbReference type="GeneID" id="88769458"/>
<dbReference type="KEGG" id="cyp:PCC8801_2395"/>
<dbReference type="eggNOG" id="ENOG5033AE4">
    <property type="taxonomic scope" value="Bacteria"/>
</dbReference>
<dbReference type="HOGENOM" id="CLU_215774_1_0_3"/>
<dbReference type="Proteomes" id="UP000008204">
    <property type="component" value="Chromosome"/>
</dbReference>
<dbReference type="GO" id="GO:0009512">
    <property type="term" value="C:cytochrome b6f complex"/>
    <property type="evidence" value="ECO:0007669"/>
    <property type="project" value="InterPro"/>
</dbReference>
<dbReference type="GO" id="GO:0031676">
    <property type="term" value="C:plasma membrane-derived thylakoid membrane"/>
    <property type="evidence" value="ECO:0007669"/>
    <property type="project" value="UniProtKB-SubCell"/>
</dbReference>
<dbReference type="GO" id="GO:0045158">
    <property type="term" value="F:electron transporter, transferring electrons within cytochrome b6/f complex of photosystem II activity"/>
    <property type="evidence" value="ECO:0007669"/>
    <property type="project" value="InterPro"/>
</dbReference>
<dbReference type="GO" id="GO:0017004">
    <property type="term" value="P:cytochrome complex assembly"/>
    <property type="evidence" value="ECO:0007669"/>
    <property type="project" value="UniProtKB-UniRule"/>
</dbReference>
<dbReference type="GO" id="GO:0015979">
    <property type="term" value="P:photosynthesis"/>
    <property type="evidence" value="ECO:0007669"/>
    <property type="project" value="UniProtKB-KW"/>
</dbReference>
<dbReference type="HAMAP" id="MF_00395">
    <property type="entry name" value="Cytb6_f_PetN"/>
    <property type="match status" value="1"/>
</dbReference>
<dbReference type="InterPro" id="IPR036143">
    <property type="entry name" value="Cytochr_b6-f_cplx_su8_sf"/>
</dbReference>
<dbReference type="InterPro" id="IPR005497">
    <property type="entry name" value="Cytochrome_b6-f_cplx_su8"/>
</dbReference>
<dbReference type="NCBIfam" id="NF011331">
    <property type="entry name" value="PRK14747.1"/>
    <property type="match status" value="1"/>
</dbReference>
<dbReference type="Pfam" id="PF03742">
    <property type="entry name" value="PetN"/>
    <property type="match status" value="1"/>
</dbReference>
<dbReference type="SUPFAM" id="SSF103451">
    <property type="entry name" value="PetN subunit of the cytochrome b6f complex"/>
    <property type="match status" value="1"/>
</dbReference>
<gene>
    <name evidence="1" type="primary">petN</name>
    <name type="ordered locus">PCC8801_2395</name>
</gene>
<proteinExistence type="inferred from homology"/>
<sequence length="29" mass="3254">MDILALGWVSVLALFTWSIAMVVWGRNGF</sequence>
<protein>
    <recommendedName>
        <fullName evidence="1">Cytochrome b6-f complex subunit 8</fullName>
    </recommendedName>
    <alternativeName>
        <fullName evidence="1">Cytochrome b6-f complex subunit PetN</fullName>
    </alternativeName>
    <alternativeName>
        <fullName evidence="1">Cytochrome b6-f complex subunit VIII</fullName>
    </alternativeName>
</protein>
<accession>B7K2L3</accession>
<organism>
    <name type="scientific">Rippkaea orientalis (strain PCC 8801 / RF-1)</name>
    <name type="common">Cyanothece sp. (strain PCC 8801)</name>
    <dbReference type="NCBI Taxonomy" id="41431"/>
    <lineage>
        <taxon>Bacteria</taxon>
        <taxon>Bacillati</taxon>
        <taxon>Cyanobacteriota</taxon>
        <taxon>Cyanophyceae</taxon>
        <taxon>Oscillatoriophycideae</taxon>
        <taxon>Chroococcales</taxon>
        <taxon>Aphanothecaceae</taxon>
        <taxon>Rippkaea</taxon>
        <taxon>Rippkaea orientalis</taxon>
    </lineage>
</organism>
<keyword id="KW-0249">Electron transport</keyword>
<keyword id="KW-0472">Membrane</keyword>
<keyword id="KW-0602">Photosynthesis</keyword>
<keyword id="KW-1185">Reference proteome</keyword>
<keyword id="KW-0793">Thylakoid</keyword>
<keyword id="KW-0812">Transmembrane</keyword>
<keyword id="KW-1133">Transmembrane helix</keyword>
<keyword id="KW-0813">Transport</keyword>
<evidence type="ECO:0000255" key="1">
    <source>
        <dbReference type="HAMAP-Rule" id="MF_00395"/>
    </source>
</evidence>
<reference key="1">
    <citation type="journal article" date="2011" name="MBio">
        <title>Novel metabolic attributes of the genus Cyanothece, comprising a group of unicellular nitrogen-fixing Cyanobacteria.</title>
        <authorList>
            <person name="Bandyopadhyay A."/>
            <person name="Elvitigala T."/>
            <person name="Welsh E."/>
            <person name="Stockel J."/>
            <person name="Liberton M."/>
            <person name="Min H."/>
            <person name="Sherman L.A."/>
            <person name="Pakrasi H.B."/>
        </authorList>
    </citation>
    <scope>NUCLEOTIDE SEQUENCE [LARGE SCALE GENOMIC DNA]</scope>
    <source>
        <strain>PCC 8801 / RF-1</strain>
    </source>
</reference>
<comment type="function">
    <text evidence="1">Component of the cytochrome b6-f complex, which mediates electron transfer between photosystem II (PSII) and photosystem I (PSI), cyclic electron flow around PSI, and state transitions.</text>
</comment>
<comment type="subunit">
    <text evidence="1">The 4 large subunits of the cytochrome b6-f complex are cytochrome b6, subunit IV (17 kDa polypeptide, PetD), cytochrome f and the Rieske protein, while the 4 small subunits are PetG, PetL, PetM and PetN. The complex functions as a dimer.</text>
</comment>
<comment type="subcellular location">
    <subcellularLocation>
        <location evidence="1">Cellular thylakoid membrane</location>
        <topology evidence="1">Single-pass membrane protein</topology>
    </subcellularLocation>
</comment>
<comment type="similarity">
    <text evidence="1">Belongs to the PetN family.</text>
</comment>
<name>PETN_RIPO1</name>